<sequence>MADSDDEYDRKRRDKFRGERDSYRTERRDDRRPVGGSAGARDEWAERNPFRGAASAGGGGARHRPDYSDYRGPGARPRYGSPGRDLPPAKRMRPDWGDGDVRANPRFGGYDPYLMQAWNDHYQSMHSAYSHAGHAPPVRESIGGGGSDTLTQPAMLNLKQFLDTQDENISDSEVMRKYTDYKTDFKRQQLNEFFVAHKDEEWFKNKYHPEDSVKRNEEQRGFLQRRTDVFMELLENGTIGSVKVDSSQADALIRVLDTCVIKLEGGTDEDLKVLDEKPKDPVVYERKAEPMQSVKEVEKTINSPKDEISEADPLPAVVSTQRKPVGPVNSDEENWDDDNDAENSTPKKELAEDSKDSDSKPEEKQLNKKKTKKRKRNSSDDDSSSSESSSSSDEEKLKEKYDVEDGLRTEQKIEAEKDRQEATKAKQEPQSPKLDEVEGNDTTEPKGLDSKINTVEIDDTLKSPEISSNPIKNTDNGDSSKVEEDEEKPSVGKDKVVETETIDLDKVKDCQPRALHRTSSIFLRNLAPSITRSEIEAMCNRFTGYLRVAIADPLVERRWYRRGWITFMRDVNIKEICWGLNNQRLRDCEMGAIVNRDLSRRVRPANGITAHKQVVRSDIKLCAKIALNLDEKFRLWAEVPKDDPNSARANESSENGSGSTYGFNSQNPVLQNITDYLIEEASAEEEELLGLTGENKDTEGEPIERDEQLISVLDRLVLYLRIVHSVDYYNHCEYPYEDEMPNRCGIIHARGPPPVRVTNNDVQEYIKMYETKLQQFLTKTVPLSDEEIKNLGAKDAETEVEKFVQANTQELAKDKWLCPLSGKKFKGPEFIRKHIFNKHEEKVDEVRKEVQYFNNYLRDPKRPQLPEHPGTSKRPESESARGGGGGYRPPMYPPFSAMPYGFGPPMMGGGRGGRNFPPARRELPLEHQRRLIGYHDLDAPANSDMFD</sequence>
<protein>
    <recommendedName>
        <fullName>Serrate RNA effector molecule homolog</fullName>
    </recommendedName>
    <alternativeName>
        <fullName>Arsenite-resistance protein 2 homolog</fullName>
    </alternativeName>
</protein>
<feature type="chain" id="PRO_0000385222" description="Serrate RNA effector molecule homolog">
    <location>
        <begin position="1"/>
        <end position="947"/>
    </location>
</feature>
<feature type="region of interest" description="Disordered" evidence="2">
    <location>
        <begin position="1"/>
        <end position="100"/>
    </location>
</feature>
<feature type="region of interest" description="Disordered" evidence="2">
    <location>
        <begin position="285"/>
        <end position="493"/>
    </location>
</feature>
<feature type="region of interest" description="Disordered" evidence="2">
    <location>
        <begin position="643"/>
        <end position="666"/>
    </location>
</feature>
<feature type="region of interest" description="Disordered" evidence="2">
    <location>
        <begin position="855"/>
        <end position="890"/>
    </location>
</feature>
<feature type="compositionally biased region" description="Basic and acidic residues" evidence="2">
    <location>
        <begin position="8"/>
        <end position="33"/>
    </location>
</feature>
<feature type="compositionally biased region" description="Basic and acidic residues" evidence="2">
    <location>
        <begin position="40"/>
        <end position="49"/>
    </location>
</feature>
<feature type="compositionally biased region" description="Basic and acidic residues" evidence="2">
    <location>
        <begin position="285"/>
        <end position="308"/>
    </location>
</feature>
<feature type="compositionally biased region" description="Acidic residues" evidence="2">
    <location>
        <begin position="330"/>
        <end position="341"/>
    </location>
</feature>
<feature type="compositionally biased region" description="Basic and acidic residues" evidence="2">
    <location>
        <begin position="345"/>
        <end position="366"/>
    </location>
</feature>
<feature type="compositionally biased region" description="Basic residues" evidence="2">
    <location>
        <begin position="367"/>
        <end position="376"/>
    </location>
</feature>
<feature type="compositionally biased region" description="Basic and acidic residues" evidence="2">
    <location>
        <begin position="393"/>
        <end position="427"/>
    </location>
</feature>
<feature type="compositionally biased region" description="Polar residues" evidence="2">
    <location>
        <begin position="465"/>
        <end position="477"/>
    </location>
</feature>
<feature type="compositionally biased region" description="Basic and acidic residues" evidence="2">
    <location>
        <begin position="478"/>
        <end position="493"/>
    </location>
</feature>
<feature type="compositionally biased region" description="Polar residues" evidence="2">
    <location>
        <begin position="647"/>
        <end position="666"/>
    </location>
</feature>
<feature type="modified residue" description="Phosphotyrosine" evidence="1">
    <location>
        <position position="79"/>
    </location>
</feature>
<feature type="modified residue" description="Phosphoserine" evidence="1">
    <location>
        <position position="81"/>
    </location>
</feature>
<feature type="modified residue" description="Phosphothreonine" evidence="1">
    <location>
        <position position="300"/>
    </location>
</feature>
<feature type="modified residue" description="Phosphoserine" evidence="1">
    <location>
        <position position="303"/>
    </location>
</feature>
<feature type="modified residue" description="Phosphoserine" evidence="1">
    <location>
        <position position="330"/>
    </location>
</feature>
<feature type="modified residue" description="Phosphoserine" evidence="1">
    <location>
        <position position="354"/>
    </location>
</feature>
<feature type="modified residue" description="Phosphoserine" evidence="1">
    <location>
        <position position="357"/>
    </location>
</feature>
<feature type="modified residue" description="Phosphoserine" evidence="1">
    <location>
        <position position="431"/>
    </location>
</feature>
<feature type="modified residue" description="Phosphoserine" evidence="1">
    <location>
        <position position="646"/>
    </location>
</feature>
<accession>B4II37</accession>
<organism>
    <name type="scientific">Drosophila sechellia</name>
    <name type="common">Fruit fly</name>
    <dbReference type="NCBI Taxonomy" id="7238"/>
    <lineage>
        <taxon>Eukaryota</taxon>
        <taxon>Metazoa</taxon>
        <taxon>Ecdysozoa</taxon>
        <taxon>Arthropoda</taxon>
        <taxon>Hexapoda</taxon>
        <taxon>Insecta</taxon>
        <taxon>Pterygota</taxon>
        <taxon>Neoptera</taxon>
        <taxon>Endopterygota</taxon>
        <taxon>Diptera</taxon>
        <taxon>Brachycera</taxon>
        <taxon>Muscomorpha</taxon>
        <taxon>Ephydroidea</taxon>
        <taxon>Drosophilidae</taxon>
        <taxon>Drosophila</taxon>
        <taxon>Sophophora</taxon>
    </lineage>
</organism>
<evidence type="ECO:0000250" key="1"/>
<evidence type="ECO:0000256" key="2">
    <source>
        <dbReference type="SAM" id="MobiDB-lite"/>
    </source>
</evidence>
<evidence type="ECO:0000305" key="3"/>
<comment type="function">
    <text evidence="1">Acts as a mediator between the cap-binding complex (CBC) and RNA-mediated gene silencing (RNAi). Involved in innate immunity via the short interfering RNAs (siRNAs) processing machinery by restricting the viral RNA production. Also involved microRNA (miRNA)-mediated silencing by contributing to the stability and delivery of primary miRNA transcripts to the primary miRNA processing complex containing drosha and pasha (By similarity).</text>
</comment>
<comment type="subunit">
    <text evidence="1">Interacts with cbp20, Dcr-2 and pasha.</text>
</comment>
<comment type="subcellular location">
    <subcellularLocation>
        <location evidence="1">Nucleus</location>
    </subcellularLocation>
</comment>
<comment type="similarity">
    <text evidence="3">Belongs to the ARS2 family.</text>
</comment>
<comment type="sequence caution" evidence="3">
    <conflict type="erroneous gene model prediction">
        <sequence resource="EMBL-CDS" id="EDW49563"/>
    </conflict>
</comment>
<keyword id="KW-0539">Nucleus</keyword>
<keyword id="KW-0597">Phosphoprotein</keyword>
<keyword id="KW-1185">Reference proteome</keyword>
<keyword id="KW-0943">RNA-mediated gene silencing</keyword>
<dbReference type="EMBL" id="CH480841">
    <property type="protein sequence ID" value="EDW49563.1"/>
    <property type="status" value="ALT_SEQ"/>
    <property type="molecule type" value="Genomic_DNA"/>
</dbReference>
<dbReference type="RefSeq" id="XP_002043397.1">
    <property type="nucleotide sequence ID" value="XM_002043361.1"/>
</dbReference>
<dbReference type="SMR" id="B4II37"/>
<dbReference type="STRING" id="7238.B4II37"/>
<dbReference type="EnsemblMetazoa" id="FBtr0199467">
    <property type="protein sequence ID" value="FBpp0197959"/>
    <property type="gene ID" value="FBgn0171397"/>
</dbReference>
<dbReference type="EnsemblMetazoa" id="XM_032714873.1">
    <property type="protein sequence ID" value="XP_032570764.1"/>
    <property type="gene ID" value="LOC6619157"/>
</dbReference>
<dbReference type="Proteomes" id="UP000001292">
    <property type="component" value="Unassembled WGS sequence"/>
</dbReference>
<dbReference type="GO" id="GO:0016604">
    <property type="term" value="C:nuclear body"/>
    <property type="evidence" value="ECO:0007669"/>
    <property type="project" value="TreeGrafter"/>
</dbReference>
<dbReference type="GO" id="GO:0005654">
    <property type="term" value="C:nucleoplasm"/>
    <property type="evidence" value="ECO:0000250"/>
    <property type="project" value="UniProtKB"/>
</dbReference>
<dbReference type="GO" id="GO:0050829">
    <property type="term" value="P:defense response to Gram-negative bacterium"/>
    <property type="evidence" value="ECO:0007669"/>
    <property type="project" value="EnsemblMetazoa"/>
</dbReference>
<dbReference type="GO" id="GO:0045071">
    <property type="term" value="P:negative regulation of viral genome replication"/>
    <property type="evidence" value="ECO:0007669"/>
    <property type="project" value="EnsemblMetazoa"/>
</dbReference>
<dbReference type="GO" id="GO:0031053">
    <property type="term" value="P:primary miRNA processing"/>
    <property type="evidence" value="ECO:0000250"/>
    <property type="project" value="UniProtKB"/>
</dbReference>
<dbReference type="GO" id="GO:0035194">
    <property type="term" value="P:regulatory ncRNA-mediated post-transcriptional gene silencing"/>
    <property type="evidence" value="ECO:0000250"/>
    <property type="project" value="UniProtKB"/>
</dbReference>
<dbReference type="GO" id="GO:0030422">
    <property type="term" value="P:siRNA processing"/>
    <property type="evidence" value="ECO:0007669"/>
    <property type="project" value="EnsemblMetazoa"/>
</dbReference>
<dbReference type="InterPro" id="IPR039727">
    <property type="entry name" value="SE/Ars2"/>
</dbReference>
<dbReference type="InterPro" id="IPR007042">
    <property type="entry name" value="SERRATE/Ars2_C"/>
</dbReference>
<dbReference type="InterPro" id="IPR021933">
    <property type="entry name" value="SERRATE/Ars2_N"/>
</dbReference>
<dbReference type="PANTHER" id="PTHR13165">
    <property type="entry name" value="ARSENITE-RESISTANCE PROTEIN 2"/>
    <property type="match status" value="1"/>
</dbReference>
<dbReference type="PANTHER" id="PTHR13165:SF0">
    <property type="entry name" value="SERRATE RNA EFFECTOR MOLECULE HOMOLOG"/>
    <property type="match status" value="1"/>
</dbReference>
<dbReference type="Pfam" id="PF04959">
    <property type="entry name" value="ARS2"/>
    <property type="match status" value="1"/>
</dbReference>
<dbReference type="Pfam" id="PF12066">
    <property type="entry name" value="SERRATE_Ars2_N"/>
    <property type="match status" value="1"/>
</dbReference>
<proteinExistence type="inferred from homology"/>
<name>SRRT_DROSE</name>
<reference key="1">
    <citation type="journal article" date="2007" name="Nature">
        <title>Evolution of genes and genomes on the Drosophila phylogeny.</title>
        <authorList>
            <consortium name="Drosophila 12 genomes consortium"/>
        </authorList>
    </citation>
    <scope>NUCLEOTIDE SEQUENCE [LARGE SCALE GENOMIC DNA]</scope>
    <source>
        <strain>Rob3c / Tucson 14021-0248.25</strain>
    </source>
</reference>
<gene>
    <name type="primary">Ars2</name>
    <name type="ORF">GM16482</name>
</gene>